<protein>
    <recommendedName>
        <fullName evidence="1">Methylenetetrahydrofolate--tRNA-(uracil-5-)-methyltransferase TrmFO</fullName>
        <ecNumber evidence="1">2.1.1.74</ecNumber>
    </recommendedName>
    <alternativeName>
        <fullName evidence="1">Folate-dependent tRNA (uracil-5-)-methyltransferase</fullName>
    </alternativeName>
    <alternativeName>
        <fullName evidence="1">Folate-dependent tRNA(M-5-U54)-methyltransferase</fullName>
    </alternativeName>
</protein>
<feature type="chain" id="PRO_0000346322" description="Methylenetetrahydrofolate--tRNA-(uracil-5-)-methyltransferase TrmFO">
    <location>
        <begin position="1"/>
        <end position="474"/>
    </location>
</feature>
<feature type="binding site" evidence="1">
    <location>
        <begin position="13"/>
        <end position="18"/>
    </location>
    <ligand>
        <name>FAD</name>
        <dbReference type="ChEBI" id="CHEBI:57692"/>
    </ligand>
</feature>
<accession>A9ISB8</accession>
<evidence type="ECO:0000255" key="1">
    <source>
        <dbReference type="HAMAP-Rule" id="MF_01037"/>
    </source>
</evidence>
<reference key="1">
    <citation type="journal article" date="2007" name="Nat. Genet.">
        <title>Genomic analysis of Bartonella identifies type IV secretion systems as host adaptability factors.</title>
        <authorList>
            <person name="Saenz H.L."/>
            <person name="Engel P."/>
            <person name="Stoeckli M.C."/>
            <person name="Lanz C."/>
            <person name="Raddatz G."/>
            <person name="Vayssier-Taussat M."/>
            <person name="Birtles R."/>
            <person name="Schuster S.C."/>
            <person name="Dehio C."/>
        </authorList>
    </citation>
    <scope>NUCLEOTIDE SEQUENCE [LARGE SCALE GENOMIC DNA]</scope>
    <source>
        <strain>CIP 105476 / IBS 506</strain>
    </source>
</reference>
<keyword id="KW-0963">Cytoplasm</keyword>
<keyword id="KW-0274">FAD</keyword>
<keyword id="KW-0285">Flavoprotein</keyword>
<keyword id="KW-0489">Methyltransferase</keyword>
<keyword id="KW-0520">NAD</keyword>
<keyword id="KW-0521">NADP</keyword>
<keyword id="KW-0808">Transferase</keyword>
<keyword id="KW-0819">tRNA processing</keyword>
<dbReference type="EC" id="2.1.1.74" evidence="1"/>
<dbReference type="EMBL" id="AM260525">
    <property type="protein sequence ID" value="CAK01284.1"/>
    <property type="molecule type" value="Genomic_DNA"/>
</dbReference>
<dbReference type="RefSeq" id="WP_012231445.1">
    <property type="nucleotide sequence ID" value="NC_010161.1"/>
</dbReference>
<dbReference type="SMR" id="A9ISB8"/>
<dbReference type="KEGG" id="btr:BT_0880"/>
<dbReference type="eggNOG" id="COG1206">
    <property type="taxonomic scope" value="Bacteria"/>
</dbReference>
<dbReference type="HOGENOM" id="CLU_033057_1_0_5"/>
<dbReference type="Proteomes" id="UP000001592">
    <property type="component" value="Chromosome"/>
</dbReference>
<dbReference type="GO" id="GO:0005829">
    <property type="term" value="C:cytosol"/>
    <property type="evidence" value="ECO:0007669"/>
    <property type="project" value="TreeGrafter"/>
</dbReference>
<dbReference type="GO" id="GO:0050660">
    <property type="term" value="F:flavin adenine dinucleotide binding"/>
    <property type="evidence" value="ECO:0007669"/>
    <property type="project" value="UniProtKB-UniRule"/>
</dbReference>
<dbReference type="GO" id="GO:0047151">
    <property type="term" value="F:tRNA (uracil(54)-C5)-methyltransferase activity, 5,10-methylenetetrahydrofolate-dependent"/>
    <property type="evidence" value="ECO:0007669"/>
    <property type="project" value="UniProtKB-UniRule"/>
</dbReference>
<dbReference type="GO" id="GO:0030488">
    <property type="term" value="P:tRNA methylation"/>
    <property type="evidence" value="ECO:0007669"/>
    <property type="project" value="TreeGrafter"/>
</dbReference>
<dbReference type="GO" id="GO:0002098">
    <property type="term" value="P:tRNA wobble uridine modification"/>
    <property type="evidence" value="ECO:0007669"/>
    <property type="project" value="TreeGrafter"/>
</dbReference>
<dbReference type="Gene3D" id="3.50.50.60">
    <property type="entry name" value="FAD/NAD(P)-binding domain"/>
    <property type="match status" value="2"/>
</dbReference>
<dbReference type="HAMAP" id="MF_01037">
    <property type="entry name" value="TrmFO"/>
    <property type="match status" value="1"/>
</dbReference>
<dbReference type="InterPro" id="IPR036188">
    <property type="entry name" value="FAD/NAD-bd_sf"/>
</dbReference>
<dbReference type="InterPro" id="IPR002218">
    <property type="entry name" value="MnmG-rel"/>
</dbReference>
<dbReference type="InterPro" id="IPR020595">
    <property type="entry name" value="MnmG-rel_CS"/>
</dbReference>
<dbReference type="InterPro" id="IPR040131">
    <property type="entry name" value="MnmG_N"/>
</dbReference>
<dbReference type="InterPro" id="IPR004417">
    <property type="entry name" value="TrmFO"/>
</dbReference>
<dbReference type="NCBIfam" id="TIGR00137">
    <property type="entry name" value="gid_trmFO"/>
    <property type="match status" value="1"/>
</dbReference>
<dbReference type="NCBIfam" id="NF003739">
    <property type="entry name" value="PRK05335.1"/>
    <property type="match status" value="1"/>
</dbReference>
<dbReference type="PANTHER" id="PTHR11806">
    <property type="entry name" value="GLUCOSE INHIBITED DIVISION PROTEIN A"/>
    <property type="match status" value="1"/>
</dbReference>
<dbReference type="PANTHER" id="PTHR11806:SF2">
    <property type="entry name" value="METHYLENETETRAHYDROFOLATE--TRNA-(URACIL-5-)-METHYLTRANSFERASE TRMFO"/>
    <property type="match status" value="1"/>
</dbReference>
<dbReference type="Pfam" id="PF01134">
    <property type="entry name" value="GIDA"/>
    <property type="match status" value="1"/>
</dbReference>
<dbReference type="SUPFAM" id="SSF51905">
    <property type="entry name" value="FAD/NAD(P)-binding domain"/>
    <property type="match status" value="1"/>
</dbReference>
<dbReference type="PROSITE" id="PS01281">
    <property type="entry name" value="GIDA_2"/>
    <property type="match status" value="1"/>
</dbReference>
<comment type="function">
    <text evidence="1">Catalyzes the folate-dependent formation of 5-methyl-uridine at position 54 (M-5-U54) in all tRNAs.</text>
</comment>
<comment type="catalytic activity">
    <reaction evidence="1">
        <text>uridine(54) in tRNA + (6R)-5,10-methylene-5,6,7,8-tetrahydrofolate + NADH + H(+) = 5-methyluridine(54) in tRNA + (6S)-5,6,7,8-tetrahydrofolate + NAD(+)</text>
        <dbReference type="Rhea" id="RHEA:16873"/>
        <dbReference type="Rhea" id="RHEA-COMP:10167"/>
        <dbReference type="Rhea" id="RHEA-COMP:10193"/>
        <dbReference type="ChEBI" id="CHEBI:15378"/>
        <dbReference type="ChEBI" id="CHEBI:15636"/>
        <dbReference type="ChEBI" id="CHEBI:57453"/>
        <dbReference type="ChEBI" id="CHEBI:57540"/>
        <dbReference type="ChEBI" id="CHEBI:57945"/>
        <dbReference type="ChEBI" id="CHEBI:65315"/>
        <dbReference type="ChEBI" id="CHEBI:74447"/>
        <dbReference type="EC" id="2.1.1.74"/>
    </reaction>
</comment>
<comment type="catalytic activity">
    <reaction evidence="1">
        <text>uridine(54) in tRNA + (6R)-5,10-methylene-5,6,7,8-tetrahydrofolate + NADPH + H(+) = 5-methyluridine(54) in tRNA + (6S)-5,6,7,8-tetrahydrofolate + NADP(+)</text>
        <dbReference type="Rhea" id="RHEA:62372"/>
        <dbReference type="Rhea" id="RHEA-COMP:10167"/>
        <dbReference type="Rhea" id="RHEA-COMP:10193"/>
        <dbReference type="ChEBI" id="CHEBI:15378"/>
        <dbReference type="ChEBI" id="CHEBI:15636"/>
        <dbReference type="ChEBI" id="CHEBI:57453"/>
        <dbReference type="ChEBI" id="CHEBI:57783"/>
        <dbReference type="ChEBI" id="CHEBI:58349"/>
        <dbReference type="ChEBI" id="CHEBI:65315"/>
        <dbReference type="ChEBI" id="CHEBI:74447"/>
        <dbReference type="EC" id="2.1.1.74"/>
    </reaction>
</comment>
<comment type="cofactor">
    <cofactor evidence="1">
        <name>FAD</name>
        <dbReference type="ChEBI" id="CHEBI:57692"/>
    </cofactor>
</comment>
<comment type="subcellular location">
    <subcellularLocation>
        <location evidence="1">Cytoplasm</location>
    </subcellularLocation>
</comment>
<comment type="similarity">
    <text evidence="1">Belongs to the MnmG family. TrmFO subfamily.</text>
</comment>
<proteinExistence type="inferred from homology"/>
<sequence length="474" mass="52555">MLKTFDTPIHIIGGGLAGCEASWQIAQSGIPVILHEMRPQKKSDAHKTDKLAELVCSNSFRCDDSSTNAVGLLHAEMRLAKSLIMKAADANKVPAGSALAVDRDGFSKTVTSALENHSLITIKREEVQEISKDWKHVIVATGPLTSPAFAQELKAITGIKALSFFDAIAPIIHTDSIDMNICWYQSRYDKIGPEGTGKDYLNCPLNKEQYETFVEALKNAEKTEFRDFEKTPYFDGCLPIEIMAERGLETLRHGPMKPMGLTNAYNPTVKPYAVVQLRQDNKLGTLYNMVGFQTKLKYGEQVRIFRMIPGLEKAEFARLGGLHRNTYLNSPIILDQTLRLKQKKQLRFAGQITGCEGYVESAAIGLLAGRFAAAEYHHNCPCLPPQTTAFGALLNHITGGHIIDEEAERPSFQPMNINFGLFPPISPIRYSGKRLPSKEKKLAKKQAITARALNDCIQWLADKESKSSCLSKNT</sequence>
<name>TRMFO_BART1</name>
<gene>
    <name evidence="1" type="primary">trmFO</name>
    <name type="ordered locus">BT_0880</name>
</gene>
<organism>
    <name type="scientific">Bartonella tribocorum (strain CIP 105476 / IBS 506)</name>
    <dbReference type="NCBI Taxonomy" id="382640"/>
    <lineage>
        <taxon>Bacteria</taxon>
        <taxon>Pseudomonadati</taxon>
        <taxon>Pseudomonadota</taxon>
        <taxon>Alphaproteobacteria</taxon>
        <taxon>Hyphomicrobiales</taxon>
        <taxon>Bartonellaceae</taxon>
        <taxon>Bartonella</taxon>
    </lineage>
</organism>